<proteinExistence type="inferred from homology"/>
<sequence length="89" mass="10195">MSLSVEAKAKIVSEFGRGTNDSGSTEVQVALLTAQINHLQGHFAEHKKDHHSRRGLLRMVSQRRKLLDYLKRKDVARYTALIERLGLRR</sequence>
<accession>A8AQ54</accession>
<keyword id="KW-1185">Reference proteome</keyword>
<keyword id="KW-0687">Ribonucleoprotein</keyword>
<keyword id="KW-0689">Ribosomal protein</keyword>
<keyword id="KW-0694">RNA-binding</keyword>
<keyword id="KW-0699">rRNA-binding</keyword>
<reference key="1">
    <citation type="submission" date="2007-08" db="EMBL/GenBank/DDBJ databases">
        <authorList>
            <consortium name="The Citrobacter koseri Genome Sequencing Project"/>
            <person name="McClelland M."/>
            <person name="Sanderson E.K."/>
            <person name="Porwollik S."/>
            <person name="Spieth J."/>
            <person name="Clifton W.S."/>
            <person name="Latreille P."/>
            <person name="Courtney L."/>
            <person name="Wang C."/>
            <person name="Pepin K."/>
            <person name="Bhonagiri V."/>
            <person name="Nash W."/>
            <person name="Johnson M."/>
            <person name="Thiruvilangam P."/>
            <person name="Wilson R."/>
        </authorList>
    </citation>
    <scope>NUCLEOTIDE SEQUENCE [LARGE SCALE GENOMIC DNA]</scope>
    <source>
        <strain>ATCC BAA-895 / CDC 4225-83 / SGSC4696</strain>
    </source>
</reference>
<comment type="function">
    <text evidence="1">One of the primary rRNA binding proteins, it binds directly to 16S rRNA where it helps nucleate assembly of the platform of the 30S subunit by binding and bridging several RNA helices of the 16S rRNA.</text>
</comment>
<comment type="function">
    <text evidence="1">Forms an intersubunit bridge (bridge B4) with the 23S rRNA of the 50S subunit in the ribosome.</text>
</comment>
<comment type="subunit">
    <text evidence="1">Part of the 30S ribosomal subunit. Forms a bridge to the 50S subunit in the 70S ribosome, contacting the 23S rRNA.</text>
</comment>
<comment type="similarity">
    <text evidence="1">Belongs to the universal ribosomal protein uS15 family.</text>
</comment>
<protein>
    <recommendedName>
        <fullName evidence="1">Small ribosomal subunit protein uS15</fullName>
    </recommendedName>
    <alternativeName>
        <fullName evidence="2">30S ribosomal protein S15</fullName>
    </alternativeName>
</protein>
<dbReference type="EMBL" id="CP000822">
    <property type="protein sequence ID" value="ABV15617.1"/>
    <property type="molecule type" value="Genomic_DNA"/>
</dbReference>
<dbReference type="RefSeq" id="WP_003861789.1">
    <property type="nucleotide sequence ID" value="NC_009792.1"/>
</dbReference>
<dbReference type="SMR" id="A8AQ54"/>
<dbReference type="STRING" id="290338.CKO_04564"/>
<dbReference type="GeneID" id="97603511"/>
<dbReference type="KEGG" id="cko:CKO_04564"/>
<dbReference type="HOGENOM" id="CLU_148518_0_0_6"/>
<dbReference type="OrthoDB" id="9799262at2"/>
<dbReference type="Proteomes" id="UP000008148">
    <property type="component" value="Chromosome"/>
</dbReference>
<dbReference type="GO" id="GO:0022627">
    <property type="term" value="C:cytosolic small ribosomal subunit"/>
    <property type="evidence" value="ECO:0007669"/>
    <property type="project" value="TreeGrafter"/>
</dbReference>
<dbReference type="GO" id="GO:0019843">
    <property type="term" value="F:rRNA binding"/>
    <property type="evidence" value="ECO:0007669"/>
    <property type="project" value="UniProtKB-UniRule"/>
</dbReference>
<dbReference type="GO" id="GO:0003735">
    <property type="term" value="F:structural constituent of ribosome"/>
    <property type="evidence" value="ECO:0007669"/>
    <property type="project" value="InterPro"/>
</dbReference>
<dbReference type="GO" id="GO:0006412">
    <property type="term" value="P:translation"/>
    <property type="evidence" value="ECO:0007669"/>
    <property type="project" value="UniProtKB-UniRule"/>
</dbReference>
<dbReference type="CDD" id="cd00353">
    <property type="entry name" value="Ribosomal_S15p_S13e"/>
    <property type="match status" value="1"/>
</dbReference>
<dbReference type="FunFam" id="1.10.287.10:FF:000002">
    <property type="entry name" value="30S ribosomal protein S15"/>
    <property type="match status" value="1"/>
</dbReference>
<dbReference type="Gene3D" id="6.10.250.3130">
    <property type="match status" value="1"/>
</dbReference>
<dbReference type="Gene3D" id="1.10.287.10">
    <property type="entry name" value="S15/NS1, RNA-binding"/>
    <property type="match status" value="1"/>
</dbReference>
<dbReference type="HAMAP" id="MF_01343_B">
    <property type="entry name" value="Ribosomal_uS15_B"/>
    <property type="match status" value="1"/>
</dbReference>
<dbReference type="InterPro" id="IPR000589">
    <property type="entry name" value="Ribosomal_uS15"/>
</dbReference>
<dbReference type="InterPro" id="IPR005290">
    <property type="entry name" value="Ribosomal_uS15_bac-type"/>
</dbReference>
<dbReference type="InterPro" id="IPR009068">
    <property type="entry name" value="uS15_NS1_RNA-bd_sf"/>
</dbReference>
<dbReference type="NCBIfam" id="TIGR00952">
    <property type="entry name" value="S15_bact"/>
    <property type="match status" value="1"/>
</dbReference>
<dbReference type="PANTHER" id="PTHR23321">
    <property type="entry name" value="RIBOSOMAL PROTEIN S15, BACTERIAL AND ORGANELLAR"/>
    <property type="match status" value="1"/>
</dbReference>
<dbReference type="PANTHER" id="PTHR23321:SF26">
    <property type="entry name" value="SMALL RIBOSOMAL SUBUNIT PROTEIN US15M"/>
    <property type="match status" value="1"/>
</dbReference>
<dbReference type="Pfam" id="PF00312">
    <property type="entry name" value="Ribosomal_S15"/>
    <property type="match status" value="1"/>
</dbReference>
<dbReference type="SMART" id="SM01387">
    <property type="entry name" value="Ribosomal_S15"/>
    <property type="match status" value="1"/>
</dbReference>
<dbReference type="SUPFAM" id="SSF47060">
    <property type="entry name" value="S15/NS1 RNA-binding domain"/>
    <property type="match status" value="1"/>
</dbReference>
<dbReference type="PROSITE" id="PS00362">
    <property type="entry name" value="RIBOSOMAL_S15"/>
    <property type="match status" value="1"/>
</dbReference>
<organism>
    <name type="scientific">Citrobacter koseri (strain ATCC BAA-895 / CDC 4225-83 / SGSC4696)</name>
    <dbReference type="NCBI Taxonomy" id="290338"/>
    <lineage>
        <taxon>Bacteria</taxon>
        <taxon>Pseudomonadati</taxon>
        <taxon>Pseudomonadota</taxon>
        <taxon>Gammaproteobacteria</taxon>
        <taxon>Enterobacterales</taxon>
        <taxon>Enterobacteriaceae</taxon>
        <taxon>Citrobacter</taxon>
    </lineage>
</organism>
<gene>
    <name evidence="1" type="primary">rpsO</name>
    <name type="ordered locus">CKO_04564</name>
</gene>
<evidence type="ECO:0000255" key="1">
    <source>
        <dbReference type="HAMAP-Rule" id="MF_01343"/>
    </source>
</evidence>
<evidence type="ECO:0000305" key="2"/>
<name>RS15_CITK8</name>
<feature type="chain" id="PRO_1000054773" description="Small ribosomal subunit protein uS15">
    <location>
        <begin position="1"/>
        <end position="89"/>
    </location>
</feature>